<accession>A7FZA3</accession>
<dbReference type="EC" id="6.3.2.9" evidence="1"/>
<dbReference type="EMBL" id="CP000726">
    <property type="protein sequence ID" value="ABS34860.1"/>
    <property type="molecule type" value="Genomic_DNA"/>
</dbReference>
<dbReference type="RefSeq" id="WP_012048369.1">
    <property type="nucleotide sequence ID" value="NC_009697.1"/>
</dbReference>
<dbReference type="SMR" id="A7FZA3"/>
<dbReference type="GeneID" id="5187736"/>
<dbReference type="KEGG" id="cba:CLB_3591"/>
<dbReference type="HOGENOM" id="CLU_032540_0_1_9"/>
<dbReference type="UniPathway" id="UPA00219"/>
<dbReference type="GO" id="GO:0005737">
    <property type="term" value="C:cytoplasm"/>
    <property type="evidence" value="ECO:0007669"/>
    <property type="project" value="UniProtKB-SubCell"/>
</dbReference>
<dbReference type="GO" id="GO:0005524">
    <property type="term" value="F:ATP binding"/>
    <property type="evidence" value="ECO:0007669"/>
    <property type="project" value="UniProtKB-UniRule"/>
</dbReference>
<dbReference type="GO" id="GO:0008764">
    <property type="term" value="F:UDP-N-acetylmuramoylalanine-D-glutamate ligase activity"/>
    <property type="evidence" value="ECO:0007669"/>
    <property type="project" value="UniProtKB-UniRule"/>
</dbReference>
<dbReference type="GO" id="GO:0051301">
    <property type="term" value="P:cell division"/>
    <property type="evidence" value="ECO:0007669"/>
    <property type="project" value="UniProtKB-KW"/>
</dbReference>
<dbReference type="GO" id="GO:0071555">
    <property type="term" value="P:cell wall organization"/>
    <property type="evidence" value="ECO:0007669"/>
    <property type="project" value="UniProtKB-KW"/>
</dbReference>
<dbReference type="GO" id="GO:0009252">
    <property type="term" value="P:peptidoglycan biosynthetic process"/>
    <property type="evidence" value="ECO:0007669"/>
    <property type="project" value="UniProtKB-UniRule"/>
</dbReference>
<dbReference type="GO" id="GO:0008360">
    <property type="term" value="P:regulation of cell shape"/>
    <property type="evidence" value="ECO:0007669"/>
    <property type="project" value="UniProtKB-KW"/>
</dbReference>
<dbReference type="Gene3D" id="3.90.190.20">
    <property type="entry name" value="Mur ligase, C-terminal domain"/>
    <property type="match status" value="1"/>
</dbReference>
<dbReference type="Gene3D" id="3.40.1190.10">
    <property type="entry name" value="Mur-like, catalytic domain"/>
    <property type="match status" value="1"/>
</dbReference>
<dbReference type="Gene3D" id="3.40.50.720">
    <property type="entry name" value="NAD(P)-binding Rossmann-like Domain"/>
    <property type="match status" value="1"/>
</dbReference>
<dbReference type="HAMAP" id="MF_00639">
    <property type="entry name" value="MurD"/>
    <property type="match status" value="1"/>
</dbReference>
<dbReference type="InterPro" id="IPR036565">
    <property type="entry name" value="Mur-like_cat_sf"/>
</dbReference>
<dbReference type="InterPro" id="IPR004101">
    <property type="entry name" value="Mur_ligase_C"/>
</dbReference>
<dbReference type="InterPro" id="IPR036615">
    <property type="entry name" value="Mur_ligase_C_dom_sf"/>
</dbReference>
<dbReference type="InterPro" id="IPR013221">
    <property type="entry name" value="Mur_ligase_cen"/>
</dbReference>
<dbReference type="InterPro" id="IPR005762">
    <property type="entry name" value="MurD"/>
</dbReference>
<dbReference type="NCBIfam" id="TIGR01087">
    <property type="entry name" value="murD"/>
    <property type="match status" value="1"/>
</dbReference>
<dbReference type="PANTHER" id="PTHR43692">
    <property type="entry name" value="UDP-N-ACETYLMURAMOYLALANINE--D-GLUTAMATE LIGASE"/>
    <property type="match status" value="1"/>
</dbReference>
<dbReference type="PANTHER" id="PTHR43692:SF1">
    <property type="entry name" value="UDP-N-ACETYLMURAMOYLALANINE--D-GLUTAMATE LIGASE"/>
    <property type="match status" value="1"/>
</dbReference>
<dbReference type="Pfam" id="PF02875">
    <property type="entry name" value="Mur_ligase_C"/>
    <property type="match status" value="1"/>
</dbReference>
<dbReference type="Pfam" id="PF08245">
    <property type="entry name" value="Mur_ligase_M"/>
    <property type="match status" value="1"/>
</dbReference>
<dbReference type="Pfam" id="PF21799">
    <property type="entry name" value="MurD-like_N"/>
    <property type="match status" value="1"/>
</dbReference>
<dbReference type="SUPFAM" id="SSF51984">
    <property type="entry name" value="MurCD N-terminal domain"/>
    <property type="match status" value="1"/>
</dbReference>
<dbReference type="SUPFAM" id="SSF53623">
    <property type="entry name" value="MurD-like peptide ligases, catalytic domain"/>
    <property type="match status" value="1"/>
</dbReference>
<dbReference type="SUPFAM" id="SSF53244">
    <property type="entry name" value="MurD-like peptide ligases, peptide-binding domain"/>
    <property type="match status" value="1"/>
</dbReference>
<protein>
    <recommendedName>
        <fullName evidence="1">UDP-N-acetylmuramoylalanine--D-glutamate ligase</fullName>
        <ecNumber evidence="1">6.3.2.9</ecNumber>
    </recommendedName>
    <alternativeName>
        <fullName evidence="1">D-glutamic acid-adding enzyme</fullName>
    </alternativeName>
    <alternativeName>
        <fullName evidence="1">UDP-N-acetylmuramoyl-L-alanyl-D-glutamate synthetase</fullName>
    </alternativeName>
</protein>
<proteinExistence type="inferred from homology"/>
<sequence length="458" mass="51464">MKSNFSKFKDFIKYKKVAVVGIGVSNRPLIKFLVKLGAKVTAFDKKHREKLGSISLELEEIGVDLVLGENYLDKLDGYDVIFKTPSMRIDRPEFVKAKESGAYITSEMEEFIKYCPAKVFGITGSDGKTTTTTLVYEMLKKEGYRTWVGGNIGTPLFANIEEMKEDHMVVLELSSFQLMTMDVSPEISLITNLSPNHLDVHKDFEEYVWAKKNIFKYQSSNNLLVLNKDDDLTNGMENEALGDVLKFSLVEKVYNGACLSNNKLTIQGKEVCDSKDIKLKGRHNIANLLAAFCMVNKYVSIDSMKYVATNFSGVEHRCEFIREVNGIKYYNDSIASSPSRTLAGLNSFEKPVILIAGGYDKKIPFEPLAEGGYDKIKILILMGDTKNKIKSAFEKVISYKKCEMEIVIVNSMEEAVKVADNMAEKGDIITLSPACASFDMYPNFEIRGNEFKNIVNSL</sequence>
<gene>
    <name evidence="1" type="primary">murD</name>
    <name type="ordered locus">CLB_3591</name>
</gene>
<name>MURD_CLOB1</name>
<comment type="function">
    <text evidence="1">Cell wall formation. Catalyzes the addition of glutamate to the nucleotide precursor UDP-N-acetylmuramoyl-L-alanine (UMA).</text>
</comment>
<comment type="catalytic activity">
    <reaction evidence="1">
        <text>UDP-N-acetyl-alpha-D-muramoyl-L-alanine + D-glutamate + ATP = UDP-N-acetyl-alpha-D-muramoyl-L-alanyl-D-glutamate + ADP + phosphate + H(+)</text>
        <dbReference type="Rhea" id="RHEA:16429"/>
        <dbReference type="ChEBI" id="CHEBI:15378"/>
        <dbReference type="ChEBI" id="CHEBI:29986"/>
        <dbReference type="ChEBI" id="CHEBI:30616"/>
        <dbReference type="ChEBI" id="CHEBI:43474"/>
        <dbReference type="ChEBI" id="CHEBI:83898"/>
        <dbReference type="ChEBI" id="CHEBI:83900"/>
        <dbReference type="ChEBI" id="CHEBI:456216"/>
        <dbReference type="EC" id="6.3.2.9"/>
    </reaction>
</comment>
<comment type="pathway">
    <text evidence="1">Cell wall biogenesis; peptidoglycan biosynthesis.</text>
</comment>
<comment type="subcellular location">
    <subcellularLocation>
        <location evidence="1">Cytoplasm</location>
    </subcellularLocation>
</comment>
<comment type="similarity">
    <text evidence="1">Belongs to the MurCDEF family.</text>
</comment>
<evidence type="ECO:0000255" key="1">
    <source>
        <dbReference type="HAMAP-Rule" id="MF_00639"/>
    </source>
</evidence>
<keyword id="KW-0067">ATP-binding</keyword>
<keyword id="KW-0131">Cell cycle</keyword>
<keyword id="KW-0132">Cell division</keyword>
<keyword id="KW-0133">Cell shape</keyword>
<keyword id="KW-0961">Cell wall biogenesis/degradation</keyword>
<keyword id="KW-0963">Cytoplasm</keyword>
<keyword id="KW-0436">Ligase</keyword>
<keyword id="KW-0547">Nucleotide-binding</keyword>
<keyword id="KW-0573">Peptidoglycan synthesis</keyword>
<organism>
    <name type="scientific">Clostridium botulinum (strain ATCC 19397 / Type A)</name>
    <dbReference type="NCBI Taxonomy" id="441770"/>
    <lineage>
        <taxon>Bacteria</taxon>
        <taxon>Bacillati</taxon>
        <taxon>Bacillota</taxon>
        <taxon>Clostridia</taxon>
        <taxon>Eubacteriales</taxon>
        <taxon>Clostridiaceae</taxon>
        <taxon>Clostridium</taxon>
    </lineage>
</organism>
<feature type="chain" id="PRO_1000056880" description="UDP-N-acetylmuramoylalanine--D-glutamate ligase">
    <location>
        <begin position="1"/>
        <end position="458"/>
    </location>
</feature>
<feature type="binding site" evidence="1">
    <location>
        <begin position="124"/>
        <end position="130"/>
    </location>
    <ligand>
        <name>ATP</name>
        <dbReference type="ChEBI" id="CHEBI:30616"/>
    </ligand>
</feature>
<reference key="1">
    <citation type="journal article" date="2007" name="PLoS ONE">
        <title>Analysis of the neurotoxin complex genes in Clostridium botulinum A1-A4 and B1 strains: BoNT/A3, /Ba4 and /B1 clusters are located within plasmids.</title>
        <authorList>
            <person name="Smith T.J."/>
            <person name="Hill K.K."/>
            <person name="Foley B.T."/>
            <person name="Detter J.C."/>
            <person name="Munk A.C."/>
            <person name="Bruce D.C."/>
            <person name="Doggett N.A."/>
            <person name="Smith L.A."/>
            <person name="Marks J.D."/>
            <person name="Xie G."/>
            <person name="Brettin T.S."/>
        </authorList>
    </citation>
    <scope>NUCLEOTIDE SEQUENCE [LARGE SCALE GENOMIC DNA]</scope>
    <source>
        <strain>ATCC 19397 / Type A</strain>
    </source>
</reference>